<evidence type="ECO:0000256" key="1">
    <source>
        <dbReference type="SAM" id="MobiDB-lite"/>
    </source>
</evidence>
<evidence type="ECO:0000305" key="2"/>
<accession>Q9BTK2</accession>
<name>YX002_HUMAN</name>
<organism>
    <name type="scientific">Homo sapiens</name>
    <name type="common">Human</name>
    <dbReference type="NCBI Taxonomy" id="9606"/>
    <lineage>
        <taxon>Eukaryota</taxon>
        <taxon>Metazoa</taxon>
        <taxon>Chordata</taxon>
        <taxon>Craniata</taxon>
        <taxon>Vertebrata</taxon>
        <taxon>Euteleostomi</taxon>
        <taxon>Mammalia</taxon>
        <taxon>Eutheria</taxon>
        <taxon>Euarchontoglires</taxon>
        <taxon>Primates</taxon>
        <taxon>Haplorrhini</taxon>
        <taxon>Catarrhini</taxon>
        <taxon>Hominidae</taxon>
        <taxon>Homo</taxon>
    </lineage>
</organism>
<protein>
    <recommendedName>
        <fullName>Putative uncharacterized protein LOC642776</fullName>
    </recommendedName>
</protein>
<proteinExistence type="uncertain"/>
<comment type="caution">
    <text evidence="2">Product of a dubious gene prediction.</text>
</comment>
<reference key="1">
    <citation type="journal article" date="2006" name="Nature">
        <title>The DNA sequence and biological annotation of human chromosome 1.</title>
        <authorList>
            <person name="Gregory S.G."/>
            <person name="Barlow K.F."/>
            <person name="McLay K.E."/>
            <person name="Kaul R."/>
            <person name="Swarbreck D."/>
            <person name="Dunham A."/>
            <person name="Scott C.E."/>
            <person name="Howe K.L."/>
            <person name="Woodfine K."/>
            <person name="Spencer C.C.A."/>
            <person name="Jones M.C."/>
            <person name="Gillson C."/>
            <person name="Searle S."/>
            <person name="Zhou Y."/>
            <person name="Kokocinski F."/>
            <person name="McDonald L."/>
            <person name="Evans R."/>
            <person name="Phillips K."/>
            <person name="Atkinson A."/>
            <person name="Cooper R."/>
            <person name="Jones C."/>
            <person name="Hall R.E."/>
            <person name="Andrews T.D."/>
            <person name="Lloyd C."/>
            <person name="Ainscough R."/>
            <person name="Almeida J.P."/>
            <person name="Ambrose K.D."/>
            <person name="Anderson F."/>
            <person name="Andrew R.W."/>
            <person name="Ashwell R.I.S."/>
            <person name="Aubin K."/>
            <person name="Babbage A.K."/>
            <person name="Bagguley C.L."/>
            <person name="Bailey J."/>
            <person name="Beasley H."/>
            <person name="Bethel G."/>
            <person name="Bird C.P."/>
            <person name="Bray-Allen S."/>
            <person name="Brown J.Y."/>
            <person name="Brown A.J."/>
            <person name="Buckley D."/>
            <person name="Burton J."/>
            <person name="Bye J."/>
            <person name="Carder C."/>
            <person name="Chapman J.C."/>
            <person name="Clark S.Y."/>
            <person name="Clarke G."/>
            <person name="Clee C."/>
            <person name="Cobley V."/>
            <person name="Collier R.E."/>
            <person name="Corby N."/>
            <person name="Coville G.J."/>
            <person name="Davies J."/>
            <person name="Deadman R."/>
            <person name="Dunn M."/>
            <person name="Earthrowl M."/>
            <person name="Ellington A.G."/>
            <person name="Errington H."/>
            <person name="Frankish A."/>
            <person name="Frankland J."/>
            <person name="French L."/>
            <person name="Garner P."/>
            <person name="Garnett J."/>
            <person name="Gay L."/>
            <person name="Ghori M.R.J."/>
            <person name="Gibson R."/>
            <person name="Gilby L.M."/>
            <person name="Gillett W."/>
            <person name="Glithero R.J."/>
            <person name="Grafham D.V."/>
            <person name="Griffiths C."/>
            <person name="Griffiths-Jones S."/>
            <person name="Grocock R."/>
            <person name="Hammond S."/>
            <person name="Harrison E.S.I."/>
            <person name="Hart E."/>
            <person name="Haugen E."/>
            <person name="Heath P.D."/>
            <person name="Holmes S."/>
            <person name="Holt K."/>
            <person name="Howden P.J."/>
            <person name="Hunt A.R."/>
            <person name="Hunt S.E."/>
            <person name="Hunter G."/>
            <person name="Isherwood J."/>
            <person name="James R."/>
            <person name="Johnson C."/>
            <person name="Johnson D."/>
            <person name="Joy A."/>
            <person name="Kay M."/>
            <person name="Kershaw J.K."/>
            <person name="Kibukawa M."/>
            <person name="Kimberley A.M."/>
            <person name="King A."/>
            <person name="Knights A.J."/>
            <person name="Lad H."/>
            <person name="Laird G."/>
            <person name="Lawlor S."/>
            <person name="Leongamornlert D.A."/>
            <person name="Lloyd D.M."/>
            <person name="Loveland J."/>
            <person name="Lovell J."/>
            <person name="Lush M.J."/>
            <person name="Lyne R."/>
            <person name="Martin S."/>
            <person name="Mashreghi-Mohammadi M."/>
            <person name="Matthews L."/>
            <person name="Matthews N.S.W."/>
            <person name="McLaren S."/>
            <person name="Milne S."/>
            <person name="Mistry S."/>
            <person name="Moore M.J.F."/>
            <person name="Nickerson T."/>
            <person name="O'Dell C.N."/>
            <person name="Oliver K."/>
            <person name="Palmeiri A."/>
            <person name="Palmer S.A."/>
            <person name="Parker A."/>
            <person name="Patel D."/>
            <person name="Pearce A.V."/>
            <person name="Peck A.I."/>
            <person name="Pelan S."/>
            <person name="Phelps K."/>
            <person name="Phillimore B.J."/>
            <person name="Plumb R."/>
            <person name="Rajan J."/>
            <person name="Raymond C."/>
            <person name="Rouse G."/>
            <person name="Saenphimmachak C."/>
            <person name="Sehra H.K."/>
            <person name="Sheridan E."/>
            <person name="Shownkeen R."/>
            <person name="Sims S."/>
            <person name="Skuce C.D."/>
            <person name="Smith M."/>
            <person name="Steward C."/>
            <person name="Subramanian S."/>
            <person name="Sycamore N."/>
            <person name="Tracey A."/>
            <person name="Tromans A."/>
            <person name="Van Helmond Z."/>
            <person name="Wall M."/>
            <person name="Wallis J.M."/>
            <person name="White S."/>
            <person name="Whitehead S.L."/>
            <person name="Wilkinson J.E."/>
            <person name="Willey D.L."/>
            <person name="Williams H."/>
            <person name="Wilming L."/>
            <person name="Wray P.W."/>
            <person name="Wu Z."/>
            <person name="Coulson A."/>
            <person name="Vaudin M."/>
            <person name="Sulston J.E."/>
            <person name="Durbin R.M."/>
            <person name="Hubbard T."/>
            <person name="Wooster R."/>
            <person name="Dunham I."/>
            <person name="Carter N.P."/>
            <person name="McVean G."/>
            <person name="Ross M.T."/>
            <person name="Harrow J."/>
            <person name="Olson M.V."/>
            <person name="Beck S."/>
            <person name="Rogers J."/>
            <person name="Bentley D.R."/>
        </authorList>
    </citation>
    <scope>NUCLEOTIDE SEQUENCE [LARGE SCALE GENOMIC DNA]</scope>
</reference>
<reference key="2">
    <citation type="journal article" date="2004" name="Genome Res.">
        <title>The status, quality, and expansion of the NIH full-length cDNA project: the Mammalian Gene Collection (MGC).</title>
        <authorList>
            <consortium name="The MGC Project Team"/>
        </authorList>
    </citation>
    <scope>NUCLEOTIDE SEQUENCE [LARGE SCALE MRNA] OF 4-44</scope>
    <source>
        <tissue>Muscle</tissue>
    </source>
</reference>
<feature type="chain" id="PRO_0000259163" description="Putative uncharacterized protein LOC642776">
    <location>
        <begin position="1"/>
        <end position="45"/>
    </location>
</feature>
<feature type="region of interest" description="Disordered" evidence="1">
    <location>
        <begin position="18"/>
        <end position="45"/>
    </location>
</feature>
<dbReference type="EMBL" id="AL772226">
    <property type="status" value="NOT_ANNOTATED_CDS"/>
    <property type="molecule type" value="Genomic_DNA"/>
</dbReference>
<dbReference type="EMBL" id="BC003645">
    <property type="protein sequence ID" value="AAH03645.1"/>
    <property type="molecule type" value="mRNA"/>
</dbReference>
<dbReference type="iPTMnet" id="Q9BTK2"/>
<dbReference type="PhosphoSitePlus" id="Q9BTK2"/>
<dbReference type="BioMuta" id="-"/>
<dbReference type="MassIVE" id="Q9BTK2"/>
<dbReference type="PeptideAtlas" id="Q9BTK2"/>
<dbReference type="neXtProt" id="NX_Q9BTK2"/>
<dbReference type="InParanoid" id="Q9BTK2"/>
<dbReference type="PAN-GO" id="Q9BTK2">
    <property type="GO annotations" value="0 GO annotations based on evolutionary models"/>
</dbReference>
<dbReference type="Pharos" id="Q9BTK2">
    <property type="development level" value="Tdark"/>
</dbReference>
<dbReference type="Proteomes" id="UP000005640">
    <property type="component" value="Unplaced"/>
</dbReference>
<sequence length="45" mass="4916">MEGGMAAYPVATRESRCRRGRIGVQPSPERRSEVVGPFPLARSLS</sequence>
<keyword id="KW-1185">Reference proteome</keyword>